<proteinExistence type="evidence at protein level"/>
<protein>
    <recommendedName>
        <fullName>Regakine-1</fullName>
    </recommendedName>
</protein>
<organism>
    <name type="scientific">Bos taurus</name>
    <name type="common">Bovine</name>
    <dbReference type="NCBI Taxonomy" id="9913"/>
    <lineage>
        <taxon>Eukaryota</taxon>
        <taxon>Metazoa</taxon>
        <taxon>Chordata</taxon>
        <taxon>Craniata</taxon>
        <taxon>Vertebrata</taxon>
        <taxon>Euteleostomi</taxon>
        <taxon>Mammalia</taxon>
        <taxon>Eutheria</taxon>
        <taxon>Laurasiatheria</taxon>
        <taxon>Artiodactyla</taxon>
        <taxon>Ruminantia</taxon>
        <taxon>Pecora</taxon>
        <taxon>Bovidae</taxon>
        <taxon>Bovinae</taxon>
        <taxon>Bos</taxon>
    </lineage>
</organism>
<comment type="function">
    <text evidence="2">Chemotactic activity for neutrophils and lymphocytes. Binds to heparin.</text>
</comment>
<comment type="subcellular location">
    <subcellularLocation>
        <location>Secreted</location>
    </subcellularLocation>
</comment>
<comment type="tissue specificity">
    <text evidence="2">Plasma serum.</text>
</comment>
<comment type="similarity">
    <text evidence="3">Belongs to the intercrine beta (chemokine CC) family.</text>
</comment>
<reference key="1">
    <citation type="journal article" date="2001" name="Biochemistry">
        <title>Gene cloning of a new plasma CC chemokine, activating and attracting myeloid cells in synergy with other chemoattractants.</title>
        <authorList>
            <person name="Struyf S."/>
            <person name="Stoops G."/>
            <person name="Van Coillie E."/>
            <person name="Gouwy M."/>
            <person name="Schutyser E."/>
            <person name="Lenaerts J.-P."/>
            <person name="Fiten P."/>
            <person name="Van Aelst I."/>
            <person name="Proost P."/>
            <person name="Opdenakker G."/>
            <person name="Van Damme J."/>
        </authorList>
    </citation>
    <scope>NUCLEOTIDE SEQUENCE [GENOMIC DNA]</scope>
</reference>
<reference key="2">
    <citation type="journal article" date="2001" name="Blood">
        <title>Identification of a blood-derived chemoattractant for neutrophils and lymphocytes as a novel CC chemokine, Regakine-1.</title>
        <authorList>
            <person name="Struyf S."/>
            <person name="Proost P."/>
            <person name="Lenaerts J.-P."/>
            <person name="Stoops S."/>
            <person name="Wuyts A."/>
            <person name="Van Damme J."/>
        </authorList>
    </citation>
    <scope>PROTEIN SEQUENCE OF 22-91</scope>
    <scope>FUNCTION</scope>
    <scope>TISSUE SPECIFICITY</scope>
    <source>
        <tissue>Serum</tissue>
    </source>
</reference>
<accession>P82943</accession>
<accession>Q8MI76</accession>
<sequence length="92" mass="10281">MRVSLAALAFLLTLAVLHSEANEEPAGNMRVCCFSSVTRKIPLSLVKNYERTGDKCPQEAVIFQTRSGRSICANPGQAWVQKYIEYLDQMSK</sequence>
<dbReference type="EMBL" id="AJ313203">
    <property type="protein sequence ID" value="CAC85743.1"/>
    <property type="molecule type" value="Genomic_DNA"/>
</dbReference>
<dbReference type="RefSeq" id="NP_001029392.1">
    <property type="nucleotide sequence ID" value="NM_001034220.2"/>
</dbReference>
<dbReference type="SMR" id="P82943"/>
<dbReference type="FunCoup" id="P82943">
    <property type="interactions" value="34"/>
</dbReference>
<dbReference type="STRING" id="9913.ENSBTAP00000013399"/>
<dbReference type="PaxDb" id="9913-ENSBTAP00000013399"/>
<dbReference type="GeneID" id="504773"/>
<dbReference type="KEGG" id="bta:504773"/>
<dbReference type="VEuPathDB" id="HostDB:ENSBTAG00000010155"/>
<dbReference type="eggNOG" id="ENOG502TCP9">
    <property type="taxonomic scope" value="Eukaryota"/>
</dbReference>
<dbReference type="HOGENOM" id="CLU_141716_4_2_1"/>
<dbReference type="InParanoid" id="P82943"/>
<dbReference type="OMA" id="SICANPG"/>
<dbReference type="OrthoDB" id="9930747at2759"/>
<dbReference type="TreeFam" id="TF334888"/>
<dbReference type="Proteomes" id="UP000009136">
    <property type="component" value="Chromosome 19"/>
</dbReference>
<dbReference type="Bgee" id="ENSBTAG00000010155">
    <property type="expression patterns" value="Expressed in lung and 103 other cell types or tissues"/>
</dbReference>
<dbReference type="GO" id="GO:0005615">
    <property type="term" value="C:extracellular space"/>
    <property type="evidence" value="ECO:0000318"/>
    <property type="project" value="GO_Central"/>
</dbReference>
<dbReference type="GO" id="GO:0048020">
    <property type="term" value="F:CCR chemokine receptor binding"/>
    <property type="evidence" value="ECO:0000318"/>
    <property type="project" value="GO_Central"/>
</dbReference>
<dbReference type="GO" id="GO:0008009">
    <property type="term" value="F:chemokine activity"/>
    <property type="evidence" value="ECO:0000318"/>
    <property type="project" value="GO_Central"/>
</dbReference>
<dbReference type="GO" id="GO:0008201">
    <property type="term" value="F:heparin binding"/>
    <property type="evidence" value="ECO:0007669"/>
    <property type="project" value="UniProtKB-KW"/>
</dbReference>
<dbReference type="GO" id="GO:0061844">
    <property type="term" value="P:antimicrobial humoral immune response mediated by antimicrobial peptide"/>
    <property type="evidence" value="ECO:0000318"/>
    <property type="project" value="GO_Central"/>
</dbReference>
<dbReference type="GO" id="GO:0070098">
    <property type="term" value="P:chemokine-mediated signaling pathway"/>
    <property type="evidence" value="ECO:0000318"/>
    <property type="project" value="GO_Central"/>
</dbReference>
<dbReference type="GO" id="GO:0048245">
    <property type="term" value="P:eosinophil chemotaxis"/>
    <property type="evidence" value="ECO:0000318"/>
    <property type="project" value="GO_Central"/>
</dbReference>
<dbReference type="GO" id="GO:0006954">
    <property type="term" value="P:inflammatory response"/>
    <property type="evidence" value="ECO:0000318"/>
    <property type="project" value="GO_Central"/>
</dbReference>
<dbReference type="GO" id="GO:0030335">
    <property type="term" value="P:positive regulation of cell migration"/>
    <property type="evidence" value="ECO:0000318"/>
    <property type="project" value="GO_Central"/>
</dbReference>
<dbReference type="CDD" id="cd00272">
    <property type="entry name" value="Chemokine_CC"/>
    <property type="match status" value="1"/>
</dbReference>
<dbReference type="FunFam" id="2.40.50.40:FF:000002">
    <property type="entry name" value="C-C motif chemokine"/>
    <property type="match status" value="1"/>
</dbReference>
<dbReference type="Gene3D" id="2.40.50.40">
    <property type="match status" value="1"/>
</dbReference>
<dbReference type="InterPro" id="IPR039809">
    <property type="entry name" value="Chemokine_b/g/d"/>
</dbReference>
<dbReference type="InterPro" id="IPR000827">
    <property type="entry name" value="Chemokine_CC_CS"/>
</dbReference>
<dbReference type="InterPro" id="IPR001811">
    <property type="entry name" value="Chemokine_IL8-like_dom"/>
</dbReference>
<dbReference type="InterPro" id="IPR036048">
    <property type="entry name" value="Interleukin_8-like_sf"/>
</dbReference>
<dbReference type="PANTHER" id="PTHR12015:SF149">
    <property type="entry name" value="REGAKINE-1"/>
    <property type="match status" value="1"/>
</dbReference>
<dbReference type="PANTHER" id="PTHR12015">
    <property type="entry name" value="SMALL INDUCIBLE CYTOKINE A"/>
    <property type="match status" value="1"/>
</dbReference>
<dbReference type="Pfam" id="PF00048">
    <property type="entry name" value="IL8"/>
    <property type="match status" value="1"/>
</dbReference>
<dbReference type="SMART" id="SM00199">
    <property type="entry name" value="SCY"/>
    <property type="match status" value="1"/>
</dbReference>
<dbReference type="SUPFAM" id="SSF54117">
    <property type="entry name" value="Interleukin 8-like chemokines"/>
    <property type="match status" value="1"/>
</dbReference>
<dbReference type="PROSITE" id="PS00472">
    <property type="entry name" value="SMALL_CYTOKINES_CC"/>
    <property type="match status" value="1"/>
</dbReference>
<evidence type="ECO:0000250" key="1"/>
<evidence type="ECO:0000269" key="2">
    <source>
    </source>
</evidence>
<evidence type="ECO:0000305" key="3"/>
<keyword id="KW-0145">Chemotaxis</keyword>
<keyword id="KW-0202">Cytokine</keyword>
<keyword id="KW-0903">Direct protein sequencing</keyword>
<keyword id="KW-1015">Disulfide bond</keyword>
<keyword id="KW-0358">Heparin-binding</keyword>
<keyword id="KW-0395">Inflammatory response</keyword>
<keyword id="KW-1185">Reference proteome</keyword>
<keyword id="KW-0964">Secreted</keyword>
<keyword id="KW-0732">Signal</keyword>
<feature type="signal peptide" evidence="2">
    <location>
        <begin position="1"/>
        <end position="21"/>
    </location>
</feature>
<feature type="chain" id="PRO_0000005140" description="Regakine-1">
    <location>
        <begin position="22"/>
        <end position="92"/>
    </location>
</feature>
<feature type="disulfide bond" evidence="1">
    <location>
        <begin position="32"/>
        <end position="56"/>
    </location>
</feature>
<feature type="disulfide bond" evidence="1">
    <location>
        <begin position="33"/>
        <end position="72"/>
    </location>
</feature>
<name>REG1_BOVIN</name>